<keyword id="KW-1003">Cell membrane</keyword>
<keyword id="KW-1015">Disulfide bond</keyword>
<keyword id="KW-0297">G-protein coupled receptor</keyword>
<keyword id="KW-0325">Glycoprotein</keyword>
<keyword id="KW-0472">Membrane</keyword>
<keyword id="KW-0552">Olfaction</keyword>
<keyword id="KW-0675">Receptor</keyword>
<keyword id="KW-1185">Reference proteome</keyword>
<keyword id="KW-0716">Sensory transduction</keyword>
<keyword id="KW-0807">Transducer</keyword>
<keyword id="KW-0812">Transmembrane</keyword>
<keyword id="KW-1133">Transmembrane helix</keyword>
<accession>Q8NG80</accession>
<accession>Q6IF04</accession>
<reference key="1">
    <citation type="submission" date="2001-07" db="EMBL/GenBank/DDBJ databases">
        <title>Genome-wide discovery and analysis of human seven transmembrane helix receptor genes.</title>
        <authorList>
            <person name="Suwa M."/>
            <person name="Sato T."/>
            <person name="Okouchi I."/>
            <person name="Arita M."/>
            <person name="Futami K."/>
            <person name="Matsumoto S."/>
            <person name="Tsutsumi S."/>
            <person name="Aburatani H."/>
            <person name="Asai K."/>
            <person name="Akiyama Y."/>
        </authorList>
    </citation>
    <scope>NUCLEOTIDE SEQUENCE [GENOMIC DNA]</scope>
</reference>
<reference key="2">
    <citation type="journal article" date="2004" name="Proc. Natl. Acad. Sci. U.S.A.">
        <title>The human olfactory receptor gene family.</title>
        <authorList>
            <person name="Malnic B."/>
            <person name="Godfrey P.A."/>
            <person name="Buck L.B."/>
        </authorList>
    </citation>
    <scope>IDENTIFICATION</scope>
</reference>
<reference key="3">
    <citation type="journal article" date="2004" name="Proc. Natl. Acad. Sci. U.S.A.">
        <authorList>
            <person name="Malnic B."/>
            <person name="Godfrey P.A."/>
            <person name="Buck L.B."/>
        </authorList>
    </citation>
    <scope>ERRATUM OF PUBMED:14983052</scope>
</reference>
<gene>
    <name type="primary">OR2L5</name>
    <name type="synonym">OR2L11</name>
</gene>
<proteinExistence type="inferred from homology"/>
<feature type="chain" id="PRO_0000150488" description="Olfactory receptor 2L5">
    <location>
        <begin position="1"/>
        <end position="312"/>
    </location>
</feature>
<feature type="topological domain" description="Extracellular" evidence="1">
    <location>
        <begin position="1"/>
        <end position="24"/>
    </location>
</feature>
<feature type="transmembrane region" description="Helical; Name=1" evidence="1">
    <location>
        <begin position="25"/>
        <end position="48"/>
    </location>
</feature>
<feature type="topological domain" description="Cytoplasmic" evidence="1">
    <location>
        <begin position="49"/>
        <end position="56"/>
    </location>
</feature>
<feature type="transmembrane region" description="Helical; Name=2" evidence="1">
    <location>
        <begin position="57"/>
        <end position="78"/>
    </location>
</feature>
<feature type="topological domain" description="Extracellular" evidence="1">
    <location>
        <begin position="79"/>
        <end position="99"/>
    </location>
</feature>
<feature type="transmembrane region" description="Helical; Name=3" evidence="1">
    <location>
        <begin position="100"/>
        <end position="119"/>
    </location>
</feature>
<feature type="topological domain" description="Cytoplasmic" evidence="1">
    <location>
        <begin position="120"/>
        <end position="138"/>
    </location>
</feature>
<feature type="transmembrane region" description="Helical; Name=4" evidence="1">
    <location>
        <begin position="139"/>
        <end position="157"/>
    </location>
</feature>
<feature type="topological domain" description="Extracellular" evidence="1">
    <location>
        <begin position="158"/>
        <end position="194"/>
    </location>
</feature>
<feature type="transmembrane region" description="Helical; Name=5" evidence="1">
    <location>
        <begin position="195"/>
        <end position="218"/>
    </location>
</feature>
<feature type="topological domain" description="Cytoplasmic" evidence="1">
    <location>
        <begin position="219"/>
        <end position="235"/>
    </location>
</feature>
<feature type="transmembrane region" description="Helical; Name=6" evidence="1">
    <location>
        <begin position="236"/>
        <end position="258"/>
    </location>
</feature>
<feature type="topological domain" description="Extracellular" evidence="1">
    <location>
        <begin position="259"/>
        <end position="271"/>
    </location>
</feature>
<feature type="transmembrane region" description="Helical; Name=7" evidence="1">
    <location>
        <begin position="272"/>
        <end position="291"/>
    </location>
</feature>
<feature type="topological domain" description="Cytoplasmic" evidence="1">
    <location>
        <begin position="292"/>
        <end position="312"/>
    </location>
</feature>
<feature type="glycosylation site" description="N-linked (GlcNAc...) asparagine" evidence="1">
    <location>
        <position position="5"/>
    </location>
</feature>
<feature type="disulfide bond" evidence="2">
    <location>
        <begin position="96"/>
        <end position="188"/>
    </location>
</feature>
<protein>
    <recommendedName>
        <fullName>Olfactory receptor 2L5</fullName>
    </recommendedName>
    <alternativeName>
        <fullName>Olfactory receptor 2L11</fullName>
    </alternativeName>
    <alternativeName>
        <fullName>Olfactory receptor OR1-53</fullName>
    </alternativeName>
</protein>
<comment type="function">
    <text evidence="3">Odorant receptor.</text>
</comment>
<comment type="subcellular location">
    <subcellularLocation>
        <location>Cell membrane</location>
        <topology>Multi-pass membrane protein</topology>
    </subcellularLocation>
</comment>
<comment type="similarity">
    <text evidence="2">Belongs to the G-protein coupled receptor 1 family.</text>
</comment>
<comment type="online information" name="Human Olfactory Receptor Data Exploratorium (HORDE)">
    <link uri="http://genome.weizmann.ac.il/horde/card/index/symbol:OR2L5"/>
</comment>
<sequence length="312" mass="35648">MENYNQTSTDFILLGLFPPSKIGLFLFILFVLIFLMALIGNLSMILLIFLDTHLHTPMYFLLSQLSLIDLNYISTIVPKMASDFLYGNKSISFIGCGIQSFFFMTFAGAEALLLTSMAYDRYVAICFPLHYPIRMSKRMYVLMITGSWMIGSINSCAHTVYAFRIPYCKSRAINHFFCDVPAMLTLACTDTWVYEYTVFLSSTIFLVFPFTGIACSYGWVLLAVYRMHSAEGRKKAYSTCSTHLTVVTFYYAPFAYTYLCPRSLRSLTEDKVLAVFYTILTPMLNPIIYSLRNKEVMGALTRVIQNIFSVKM</sequence>
<evidence type="ECO:0000255" key="1"/>
<evidence type="ECO:0000255" key="2">
    <source>
        <dbReference type="PROSITE-ProRule" id="PRU00521"/>
    </source>
</evidence>
<evidence type="ECO:0000305" key="3"/>
<name>OR2L5_HUMAN</name>
<dbReference type="EMBL" id="AB065956">
    <property type="protein sequence ID" value="BAC06169.1"/>
    <property type="molecule type" value="Genomic_DNA"/>
</dbReference>
<dbReference type="EMBL" id="BK004458">
    <property type="protein sequence ID" value="DAA04856.1"/>
    <property type="molecule type" value="Genomic_DNA"/>
</dbReference>
<dbReference type="CCDS" id="CCDS58068.1"/>
<dbReference type="RefSeq" id="NP_001245213.1">
    <property type="nucleotide sequence ID" value="NM_001258284.2"/>
</dbReference>
<dbReference type="SMR" id="Q8NG80"/>
<dbReference type="BioGRID" id="123489">
    <property type="interactions" value="1"/>
</dbReference>
<dbReference type="FunCoup" id="Q8NG80">
    <property type="interactions" value="447"/>
</dbReference>
<dbReference type="STRING" id="9606.ENSP00000347428"/>
<dbReference type="GlyCosmos" id="Q8NG80">
    <property type="glycosylation" value="1 site, No reported glycans"/>
</dbReference>
<dbReference type="GlyGen" id="Q8NG80">
    <property type="glycosylation" value="1 site"/>
</dbReference>
<dbReference type="BioMuta" id="OR2L5"/>
<dbReference type="DMDM" id="38372496"/>
<dbReference type="MassIVE" id="Q8NG80"/>
<dbReference type="PaxDb" id="9606-ENSP00000347428"/>
<dbReference type="Antibodypedia" id="64186">
    <property type="antibodies" value="36 antibodies from 14 providers"/>
</dbReference>
<dbReference type="DNASU" id="81466"/>
<dbReference type="Ensembl" id="ENST00000355281.2">
    <property type="protein sequence ID" value="ENSP00000347428.1"/>
    <property type="gene ID" value="ENSG00000197454.2"/>
</dbReference>
<dbReference type="GeneID" id="81466"/>
<dbReference type="KEGG" id="hsa:81466"/>
<dbReference type="MANE-Select" id="ENST00000355281.2">
    <property type="protein sequence ID" value="ENSP00000347428.1"/>
    <property type="RefSeq nucleotide sequence ID" value="NM_001258284.2"/>
    <property type="RefSeq protein sequence ID" value="NP_001245213.1"/>
</dbReference>
<dbReference type="UCSC" id="uc031psy.1">
    <property type="organism name" value="human"/>
</dbReference>
<dbReference type="AGR" id="HGNC:15011"/>
<dbReference type="CTD" id="81466"/>
<dbReference type="GeneCards" id="OR2L5"/>
<dbReference type="HGNC" id="HGNC:15011">
    <property type="gene designation" value="OR2L5"/>
</dbReference>
<dbReference type="HPA" id="ENSG00000197454">
    <property type="expression patterns" value="Not detected"/>
</dbReference>
<dbReference type="neXtProt" id="NX_Q8NG80"/>
<dbReference type="OpenTargets" id="ENSG00000197454"/>
<dbReference type="VEuPathDB" id="HostDB:ENSG00000197454"/>
<dbReference type="eggNOG" id="ENOG502RTYI">
    <property type="taxonomic scope" value="Eukaryota"/>
</dbReference>
<dbReference type="GeneTree" id="ENSGT01130000278325"/>
<dbReference type="HOGENOM" id="CLU_012526_1_0_1"/>
<dbReference type="InParanoid" id="Q8NG80"/>
<dbReference type="OMA" id="LPFTCIV"/>
<dbReference type="OrthoDB" id="9834388at2759"/>
<dbReference type="PAN-GO" id="Q8NG80">
    <property type="GO annotations" value="0 GO annotations based on evolutionary models"/>
</dbReference>
<dbReference type="PhylomeDB" id="Q8NG80"/>
<dbReference type="TreeFam" id="TF337295"/>
<dbReference type="PathwayCommons" id="Q8NG80"/>
<dbReference type="Reactome" id="R-HSA-9752946">
    <property type="pathway name" value="Expression and translocation of olfactory receptors"/>
</dbReference>
<dbReference type="BioGRID-ORCS" id="81466">
    <property type="hits" value="11 hits in 700 CRISPR screens"/>
</dbReference>
<dbReference type="GenomeRNAi" id="81466"/>
<dbReference type="Pharos" id="Q8NG80">
    <property type="development level" value="Tdark"/>
</dbReference>
<dbReference type="PRO" id="PR:Q8NG80"/>
<dbReference type="Proteomes" id="UP000005640">
    <property type="component" value="Chromosome 1"/>
</dbReference>
<dbReference type="RNAct" id="Q8NG80">
    <property type="molecule type" value="protein"/>
</dbReference>
<dbReference type="Bgee" id="ENSG00000197454">
    <property type="expression patterns" value="Expressed in primordial germ cell in gonad"/>
</dbReference>
<dbReference type="ExpressionAtlas" id="Q8NG80">
    <property type="expression patterns" value="baseline and differential"/>
</dbReference>
<dbReference type="GO" id="GO:0005886">
    <property type="term" value="C:plasma membrane"/>
    <property type="evidence" value="ECO:0000318"/>
    <property type="project" value="GO_Central"/>
</dbReference>
<dbReference type="GO" id="GO:0004930">
    <property type="term" value="F:G protein-coupled receptor activity"/>
    <property type="evidence" value="ECO:0007669"/>
    <property type="project" value="UniProtKB-KW"/>
</dbReference>
<dbReference type="GO" id="GO:0004984">
    <property type="term" value="F:olfactory receptor activity"/>
    <property type="evidence" value="ECO:0000318"/>
    <property type="project" value="GO_Central"/>
</dbReference>
<dbReference type="GO" id="GO:0050911">
    <property type="term" value="P:detection of chemical stimulus involved in sensory perception of smell"/>
    <property type="evidence" value="ECO:0000318"/>
    <property type="project" value="GO_Central"/>
</dbReference>
<dbReference type="CDD" id="cd15421">
    <property type="entry name" value="7tmA_OR2T-like"/>
    <property type="match status" value="1"/>
</dbReference>
<dbReference type="FunFam" id="1.10.1220.70:FF:000001">
    <property type="entry name" value="Olfactory receptor"/>
    <property type="match status" value="1"/>
</dbReference>
<dbReference type="FunFam" id="1.20.1070.10:FF:000008">
    <property type="entry name" value="Olfactory receptor"/>
    <property type="match status" value="1"/>
</dbReference>
<dbReference type="Gene3D" id="1.20.1070.10">
    <property type="entry name" value="Rhodopsin 7-helix transmembrane proteins"/>
    <property type="match status" value="1"/>
</dbReference>
<dbReference type="InterPro" id="IPR000276">
    <property type="entry name" value="GPCR_Rhodpsn"/>
</dbReference>
<dbReference type="InterPro" id="IPR017452">
    <property type="entry name" value="GPCR_Rhodpsn_7TM"/>
</dbReference>
<dbReference type="InterPro" id="IPR000725">
    <property type="entry name" value="Olfact_rcpt"/>
</dbReference>
<dbReference type="PANTHER" id="PTHR26453">
    <property type="entry name" value="OLFACTORY RECEPTOR"/>
    <property type="match status" value="1"/>
</dbReference>
<dbReference type="Pfam" id="PF13853">
    <property type="entry name" value="7tm_4"/>
    <property type="match status" value="1"/>
</dbReference>
<dbReference type="PRINTS" id="PR00237">
    <property type="entry name" value="GPCRRHODOPSN"/>
</dbReference>
<dbReference type="PRINTS" id="PR00245">
    <property type="entry name" value="OLFACTORYR"/>
</dbReference>
<dbReference type="SUPFAM" id="SSF81321">
    <property type="entry name" value="Family A G protein-coupled receptor-like"/>
    <property type="match status" value="1"/>
</dbReference>
<dbReference type="PROSITE" id="PS00237">
    <property type="entry name" value="G_PROTEIN_RECEP_F1_1"/>
    <property type="match status" value="1"/>
</dbReference>
<dbReference type="PROSITE" id="PS50262">
    <property type="entry name" value="G_PROTEIN_RECEP_F1_2"/>
    <property type="match status" value="1"/>
</dbReference>
<organism>
    <name type="scientific">Homo sapiens</name>
    <name type="common">Human</name>
    <dbReference type="NCBI Taxonomy" id="9606"/>
    <lineage>
        <taxon>Eukaryota</taxon>
        <taxon>Metazoa</taxon>
        <taxon>Chordata</taxon>
        <taxon>Craniata</taxon>
        <taxon>Vertebrata</taxon>
        <taxon>Euteleostomi</taxon>
        <taxon>Mammalia</taxon>
        <taxon>Eutheria</taxon>
        <taxon>Euarchontoglires</taxon>
        <taxon>Primates</taxon>
        <taxon>Haplorrhini</taxon>
        <taxon>Catarrhini</taxon>
        <taxon>Hominidae</taxon>
        <taxon>Homo</taxon>
    </lineage>
</organism>